<feature type="chain" id="PRO_1000045335" description="Probable transcriptional regulatory protein Mpe_A1337">
    <location>
        <begin position="1"/>
        <end position="241"/>
    </location>
</feature>
<feature type="region of interest" description="Disordered" evidence="2">
    <location>
        <begin position="1"/>
        <end position="20"/>
    </location>
</feature>
<keyword id="KW-0963">Cytoplasm</keyword>
<keyword id="KW-0238">DNA-binding</keyword>
<keyword id="KW-1185">Reference proteome</keyword>
<keyword id="KW-0804">Transcription</keyword>
<keyword id="KW-0805">Transcription regulation</keyword>
<sequence>MAGHSKWANIQHRKGRQDEKRGKIWTRIIREIVVAARAGGGDTAMNPRLRLAIDKAKAANMPADRIKYNVDKATGNQEGVSYEEIRYEGYGIGGAAIIIDTMTDNRVRTVAEVRHAFSKYGGNLGTDGSVSFQFKHCGQFMFAPGSSEDRIMEVALDAGAEDVVTDDDGTVEVLCAPPDFEAVQAALQAAGLVPELAEVTMRAENTVALDGEDAQRMQKLLDVLEDLDDTQAVFHNAELDE</sequence>
<organism>
    <name type="scientific">Methylibium petroleiphilum (strain ATCC BAA-1232 / LMG 22953 / PM1)</name>
    <dbReference type="NCBI Taxonomy" id="420662"/>
    <lineage>
        <taxon>Bacteria</taxon>
        <taxon>Pseudomonadati</taxon>
        <taxon>Pseudomonadota</taxon>
        <taxon>Betaproteobacteria</taxon>
        <taxon>Burkholderiales</taxon>
        <taxon>Sphaerotilaceae</taxon>
        <taxon>Methylibium</taxon>
    </lineage>
</organism>
<gene>
    <name type="ordered locus">Mpe_A1337</name>
</gene>
<name>Y1337_METPP</name>
<reference key="1">
    <citation type="journal article" date="2007" name="J. Bacteriol.">
        <title>Whole-genome analysis of the methyl tert-butyl ether-degrading beta-proteobacterium Methylibium petroleiphilum PM1.</title>
        <authorList>
            <person name="Kane S.R."/>
            <person name="Chakicherla A.Y."/>
            <person name="Chain P.S.G."/>
            <person name="Schmidt R."/>
            <person name="Shin M.W."/>
            <person name="Legler T.C."/>
            <person name="Scow K.M."/>
            <person name="Larimer F.W."/>
            <person name="Lucas S.M."/>
            <person name="Richardson P.M."/>
            <person name="Hristova K.R."/>
        </authorList>
    </citation>
    <scope>NUCLEOTIDE SEQUENCE [LARGE SCALE GENOMIC DNA]</scope>
    <source>
        <strain>ATCC BAA-1232 / LMG 22953 / PM1</strain>
    </source>
</reference>
<protein>
    <recommendedName>
        <fullName evidence="1">Probable transcriptional regulatory protein Mpe_A1337</fullName>
    </recommendedName>
</protein>
<evidence type="ECO:0000255" key="1">
    <source>
        <dbReference type="HAMAP-Rule" id="MF_00693"/>
    </source>
</evidence>
<evidence type="ECO:0000256" key="2">
    <source>
        <dbReference type="SAM" id="MobiDB-lite"/>
    </source>
</evidence>
<comment type="subcellular location">
    <subcellularLocation>
        <location evidence="1">Cytoplasm</location>
    </subcellularLocation>
</comment>
<comment type="similarity">
    <text evidence="1">Belongs to the TACO1 family.</text>
</comment>
<accession>A2SFG0</accession>
<dbReference type="EMBL" id="CP000555">
    <property type="protein sequence ID" value="ABM94299.1"/>
    <property type="molecule type" value="Genomic_DNA"/>
</dbReference>
<dbReference type="RefSeq" id="WP_011828936.1">
    <property type="nucleotide sequence ID" value="NC_008825.1"/>
</dbReference>
<dbReference type="SMR" id="A2SFG0"/>
<dbReference type="STRING" id="420662.Mpe_A1337"/>
<dbReference type="KEGG" id="mpt:Mpe_A1337"/>
<dbReference type="eggNOG" id="COG0217">
    <property type="taxonomic scope" value="Bacteria"/>
</dbReference>
<dbReference type="HOGENOM" id="CLU_062974_2_2_4"/>
<dbReference type="Proteomes" id="UP000000366">
    <property type="component" value="Chromosome"/>
</dbReference>
<dbReference type="GO" id="GO:0005829">
    <property type="term" value="C:cytosol"/>
    <property type="evidence" value="ECO:0007669"/>
    <property type="project" value="TreeGrafter"/>
</dbReference>
<dbReference type="GO" id="GO:0003677">
    <property type="term" value="F:DNA binding"/>
    <property type="evidence" value="ECO:0007669"/>
    <property type="project" value="UniProtKB-UniRule"/>
</dbReference>
<dbReference type="GO" id="GO:0006355">
    <property type="term" value="P:regulation of DNA-templated transcription"/>
    <property type="evidence" value="ECO:0007669"/>
    <property type="project" value="UniProtKB-UniRule"/>
</dbReference>
<dbReference type="FunFam" id="1.10.10.200:FF:000002">
    <property type="entry name" value="Probable transcriptional regulatory protein CLM62_37755"/>
    <property type="match status" value="1"/>
</dbReference>
<dbReference type="FunFam" id="3.30.70.980:FF:000002">
    <property type="entry name" value="Probable transcriptional regulatory protein YebC"/>
    <property type="match status" value="1"/>
</dbReference>
<dbReference type="Gene3D" id="1.10.10.200">
    <property type="match status" value="1"/>
</dbReference>
<dbReference type="Gene3D" id="3.30.70.980">
    <property type="match status" value="2"/>
</dbReference>
<dbReference type="HAMAP" id="MF_00693">
    <property type="entry name" value="Transcrip_reg_TACO1"/>
    <property type="match status" value="1"/>
</dbReference>
<dbReference type="InterPro" id="IPR017856">
    <property type="entry name" value="Integrase-like_N"/>
</dbReference>
<dbReference type="InterPro" id="IPR048300">
    <property type="entry name" value="TACO1_YebC-like_2nd/3rd_dom"/>
</dbReference>
<dbReference type="InterPro" id="IPR049083">
    <property type="entry name" value="TACO1_YebC_N"/>
</dbReference>
<dbReference type="InterPro" id="IPR002876">
    <property type="entry name" value="Transcrip_reg_TACO1-like"/>
</dbReference>
<dbReference type="InterPro" id="IPR026564">
    <property type="entry name" value="Transcrip_reg_TACO1-like_dom3"/>
</dbReference>
<dbReference type="InterPro" id="IPR029072">
    <property type="entry name" value="YebC-like"/>
</dbReference>
<dbReference type="NCBIfam" id="NF001030">
    <property type="entry name" value="PRK00110.1"/>
    <property type="match status" value="1"/>
</dbReference>
<dbReference type="NCBIfam" id="NF009044">
    <property type="entry name" value="PRK12378.1"/>
    <property type="match status" value="1"/>
</dbReference>
<dbReference type="NCBIfam" id="TIGR01033">
    <property type="entry name" value="YebC/PmpR family DNA-binding transcriptional regulator"/>
    <property type="match status" value="1"/>
</dbReference>
<dbReference type="PANTHER" id="PTHR12532:SF6">
    <property type="entry name" value="TRANSCRIPTIONAL REGULATORY PROTEIN YEBC-RELATED"/>
    <property type="match status" value="1"/>
</dbReference>
<dbReference type="PANTHER" id="PTHR12532">
    <property type="entry name" value="TRANSLATIONAL ACTIVATOR OF CYTOCHROME C OXIDASE 1"/>
    <property type="match status" value="1"/>
</dbReference>
<dbReference type="Pfam" id="PF20772">
    <property type="entry name" value="TACO1_YebC_N"/>
    <property type="match status" value="1"/>
</dbReference>
<dbReference type="Pfam" id="PF01709">
    <property type="entry name" value="Transcrip_reg"/>
    <property type="match status" value="1"/>
</dbReference>
<dbReference type="SUPFAM" id="SSF75625">
    <property type="entry name" value="YebC-like"/>
    <property type="match status" value="1"/>
</dbReference>
<proteinExistence type="inferred from homology"/>